<gene>
    <name evidence="1" type="primary">secA</name>
    <name type="ordered locus">Sez_0367</name>
</gene>
<organism>
    <name type="scientific">Streptococcus equi subsp. zooepidemicus (strain MGCS10565)</name>
    <dbReference type="NCBI Taxonomy" id="552526"/>
    <lineage>
        <taxon>Bacteria</taxon>
        <taxon>Bacillati</taxon>
        <taxon>Bacillota</taxon>
        <taxon>Bacilli</taxon>
        <taxon>Lactobacillales</taxon>
        <taxon>Streptococcaceae</taxon>
        <taxon>Streptococcus</taxon>
    </lineage>
</organism>
<feature type="chain" id="PRO_1000145064" description="Protein translocase subunit SecA">
    <location>
        <begin position="1"/>
        <end position="842"/>
    </location>
</feature>
<feature type="binding site" evidence="1">
    <location>
        <position position="85"/>
    </location>
    <ligand>
        <name>ATP</name>
        <dbReference type="ChEBI" id="CHEBI:30616"/>
    </ligand>
</feature>
<feature type="binding site" evidence="1">
    <location>
        <begin position="103"/>
        <end position="107"/>
    </location>
    <ligand>
        <name>ATP</name>
        <dbReference type="ChEBI" id="CHEBI:30616"/>
    </ligand>
</feature>
<feature type="binding site" evidence="1">
    <location>
        <position position="493"/>
    </location>
    <ligand>
        <name>ATP</name>
        <dbReference type="ChEBI" id="CHEBI:30616"/>
    </ligand>
</feature>
<feature type="binding site" evidence="1">
    <location>
        <position position="825"/>
    </location>
    <ligand>
        <name>Zn(2+)</name>
        <dbReference type="ChEBI" id="CHEBI:29105"/>
    </ligand>
</feature>
<feature type="binding site" evidence="1">
    <location>
        <position position="827"/>
    </location>
    <ligand>
        <name>Zn(2+)</name>
        <dbReference type="ChEBI" id="CHEBI:29105"/>
    </ligand>
</feature>
<feature type="binding site" evidence="1">
    <location>
        <position position="836"/>
    </location>
    <ligand>
        <name>Zn(2+)</name>
        <dbReference type="ChEBI" id="CHEBI:29105"/>
    </ligand>
</feature>
<feature type="binding site" evidence="1">
    <location>
        <position position="837"/>
    </location>
    <ligand>
        <name>Zn(2+)</name>
        <dbReference type="ChEBI" id="CHEBI:29105"/>
    </ligand>
</feature>
<protein>
    <recommendedName>
        <fullName evidence="1">Protein translocase subunit SecA</fullName>
        <ecNumber evidence="1">7.4.2.8</ecNumber>
    </recommendedName>
</protein>
<comment type="function">
    <text evidence="1">Part of the Sec protein translocase complex. Interacts with the SecYEG preprotein conducting channel. Has a central role in coupling the hydrolysis of ATP to the transfer of proteins into and across the cell membrane, serving as an ATP-driven molecular motor driving the stepwise translocation of polypeptide chains across the membrane.</text>
</comment>
<comment type="catalytic activity">
    <reaction evidence="1">
        <text>ATP + H2O + cellular proteinSide 1 = ADP + phosphate + cellular proteinSide 2.</text>
        <dbReference type="EC" id="7.4.2.8"/>
    </reaction>
</comment>
<comment type="cofactor">
    <cofactor evidence="1">
        <name>Zn(2+)</name>
        <dbReference type="ChEBI" id="CHEBI:29105"/>
    </cofactor>
    <text evidence="1">May bind 1 zinc ion per subunit.</text>
</comment>
<comment type="subunit">
    <text evidence="1">Monomer and homodimer. Part of the essential Sec protein translocation apparatus which comprises SecA, SecYEG and auxiliary proteins SecDF. Other proteins may also be involved.</text>
</comment>
<comment type="subcellular location">
    <subcellularLocation>
        <location evidence="1">Cell membrane</location>
        <topology evidence="1">Peripheral membrane protein</topology>
        <orientation evidence="1">Cytoplasmic side</orientation>
    </subcellularLocation>
    <subcellularLocation>
        <location evidence="1">Cytoplasm</location>
    </subcellularLocation>
    <text evidence="1">Distribution is 50-50.</text>
</comment>
<comment type="similarity">
    <text evidence="1">Belongs to the SecA family.</text>
</comment>
<proteinExistence type="inferred from homology"/>
<dbReference type="EC" id="7.4.2.8" evidence="1"/>
<dbReference type="EMBL" id="CP001129">
    <property type="protein sequence ID" value="ACG61743.1"/>
    <property type="molecule type" value="Genomic_DNA"/>
</dbReference>
<dbReference type="RefSeq" id="WP_012515019.1">
    <property type="nucleotide sequence ID" value="NC_011134.1"/>
</dbReference>
<dbReference type="SMR" id="B4U176"/>
<dbReference type="KEGG" id="sez:Sez_0367"/>
<dbReference type="HOGENOM" id="CLU_005314_3_0_9"/>
<dbReference type="Proteomes" id="UP000001873">
    <property type="component" value="Chromosome"/>
</dbReference>
<dbReference type="GO" id="GO:0031522">
    <property type="term" value="C:cell envelope Sec protein transport complex"/>
    <property type="evidence" value="ECO:0007669"/>
    <property type="project" value="TreeGrafter"/>
</dbReference>
<dbReference type="GO" id="GO:0005829">
    <property type="term" value="C:cytosol"/>
    <property type="evidence" value="ECO:0007669"/>
    <property type="project" value="TreeGrafter"/>
</dbReference>
<dbReference type="GO" id="GO:0005886">
    <property type="term" value="C:plasma membrane"/>
    <property type="evidence" value="ECO:0007669"/>
    <property type="project" value="UniProtKB-SubCell"/>
</dbReference>
<dbReference type="GO" id="GO:0005524">
    <property type="term" value="F:ATP binding"/>
    <property type="evidence" value="ECO:0007669"/>
    <property type="project" value="UniProtKB-UniRule"/>
</dbReference>
<dbReference type="GO" id="GO:0046872">
    <property type="term" value="F:metal ion binding"/>
    <property type="evidence" value="ECO:0007669"/>
    <property type="project" value="UniProtKB-KW"/>
</dbReference>
<dbReference type="GO" id="GO:0008564">
    <property type="term" value="F:protein-exporting ATPase activity"/>
    <property type="evidence" value="ECO:0007669"/>
    <property type="project" value="UniProtKB-EC"/>
</dbReference>
<dbReference type="GO" id="GO:0065002">
    <property type="term" value="P:intracellular protein transmembrane transport"/>
    <property type="evidence" value="ECO:0007669"/>
    <property type="project" value="UniProtKB-UniRule"/>
</dbReference>
<dbReference type="GO" id="GO:0017038">
    <property type="term" value="P:protein import"/>
    <property type="evidence" value="ECO:0007669"/>
    <property type="project" value="InterPro"/>
</dbReference>
<dbReference type="GO" id="GO:0006605">
    <property type="term" value="P:protein targeting"/>
    <property type="evidence" value="ECO:0007669"/>
    <property type="project" value="UniProtKB-UniRule"/>
</dbReference>
<dbReference type="GO" id="GO:0043952">
    <property type="term" value="P:protein transport by the Sec complex"/>
    <property type="evidence" value="ECO:0007669"/>
    <property type="project" value="TreeGrafter"/>
</dbReference>
<dbReference type="CDD" id="cd17928">
    <property type="entry name" value="DEXDc_SecA"/>
    <property type="match status" value="1"/>
</dbReference>
<dbReference type="CDD" id="cd18803">
    <property type="entry name" value="SF2_C_secA"/>
    <property type="match status" value="1"/>
</dbReference>
<dbReference type="FunFam" id="1.10.3060.10:FF:000002">
    <property type="entry name" value="Preprotein translocase subunit SecA"/>
    <property type="match status" value="1"/>
</dbReference>
<dbReference type="FunFam" id="3.40.50.300:FF:000429">
    <property type="entry name" value="Preprotein translocase subunit SecA"/>
    <property type="match status" value="1"/>
</dbReference>
<dbReference type="FunFam" id="3.90.1440.10:FF:000001">
    <property type="entry name" value="Preprotein translocase subunit SecA"/>
    <property type="match status" value="1"/>
</dbReference>
<dbReference type="Gene3D" id="1.10.3060.10">
    <property type="entry name" value="Helical scaffold and wing domains of SecA"/>
    <property type="match status" value="1"/>
</dbReference>
<dbReference type="Gene3D" id="3.40.50.300">
    <property type="entry name" value="P-loop containing nucleotide triphosphate hydrolases"/>
    <property type="match status" value="3"/>
</dbReference>
<dbReference type="Gene3D" id="3.90.1440.10">
    <property type="entry name" value="SecA, preprotein cross-linking domain"/>
    <property type="match status" value="1"/>
</dbReference>
<dbReference type="HAMAP" id="MF_01382">
    <property type="entry name" value="SecA"/>
    <property type="match status" value="1"/>
</dbReference>
<dbReference type="InterPro" id="IPR014001">
    <property type="entry name" value="Helicase_ATP-bd"/>
</dbReference>
<dbReference type="InterPro" id="IPR001650">
    <property type="entry name" value="Helicase_C-like"/>
</dbReference>
<dbReference type="InterPro" id="IPR027417">
    <property type="entry name" value="P-loop_NTPase"/>
</dbReference>
<dbReference type="InterPro" id="IPR004027">
    <property type="entry name" value="SEC_C_motif"/>
</dbReference>
<dbReference type="InterPro" id="IPR000185">
    <property type="entry name" value="SecA"/>
</dbReference>
<dbReference type="InterPro" id="IPR020937">
    <property type="entry name" value="SecA_CS"/>
</dbReference>
<dbReference type="InterPro" id="IPR011115">
    <property type="entry name" value="SecA_DEAD"/>
</dbReference>
<dbReference type="InterPro" id="IPR014018">
    <property type="entry name" value="SecA_motor_DEAD"/>
</dbReference>
<dbReference type="InterPro" id="IPR011130">
    <property type="entry name" value="SecA_preprotein_X-link_dom"/>
</dbReference>
<dbReference type="InterPro" id="IPR044722">
    <property type="entry name" value="SecA_SF2_C"/>
</dbReference>
<dbReference type="InterPro" id="IPR011116">
    <property type="entry name" value="SecA_Wing/Scaffold"/>
</dbReference>
<dbReference type="InterPro" id="IPR036266">
    <property type="entry name" value="SecA_Wing/Scaffold_sf"/>
</dbReference>
<dbReference type="InterPro" id="IPR036670">
    <property type="entry name" value="SecA_X-link_sf"/>
</dbReference>
<dbReference type="NCBIfam" id="NF006630">
    <property type="entry name" value="PRK09200.1"/>
    <property type="match status" value="1"/>
</dbReference>
<dbReference type="NCBIfam" id="TIGR00963">
    <property type="entry name" value="secA"/>
    <property type="match status" value="1"/>
</dbReference>
<dbReference type="PANTHER" id="PTHR30612:SF0">
    <property type="entry name" value="CHLOROPLAST PROTEIN-TRANSPORTING ATPASE"/>
    <property type="match status" value="1"/>
</dbReference>
<dbReference type="PANTHER" id="PTHR30612">
    <property type="entry name" value="SECA INNER MEMBRANE COMPONENT OF SEC PROTEIN SECRETION SYSTEM"/>
    <property type="match status" value="1"/>
</dbReference>
<dbReference type="Pfam" id="PF21090">
    <property type="entry name" value="P-loop_SecA"/>
    <property type="match status" value="1"/>
</dbReference>
<dbReference type="Pfam" id="PF02810">
    <property type="entry name" value="SEC-C"/>
    <property type="match status" value="1"/>
</dbReference>
<dbReference type="Pfam" id="PF07517">
    <property type="entry name" value="SecA_DEAD"/>
    <property type="match status" value="1"/>
</dbReference>
<dbReference type="Pfam" id="PF01043">
    <property type="entry name" value="SecA_PP_bind"/>
    <property type="match status" value="1"/>
</dbReference>
<dbReference type="Pfam" id="PF07516">
    <property type="entry name" value="SecA_SW"/>
    <property type="match status" value="1"/>
</dbReference>
<dbReference type="PRINTS" id="PR00906">
    <property type="entry name" value="SECA"/>
</dbReference>
<dbReference type="SMART" id="SM00957">
    <property type="entry name" value="SecA_DEAD"/>
    <property type="match status" value="1"/>
</dbReference>
<dbReference type="SMART" id="SM00958">
    <property type="entry name" value="SecA_PP_bind"/>
    <property type="match status" value="1"/>
</dbReference>
<dbReference type="SUPFAM" id="SSF81886">
    <property type="entry name" value="Helical scaffold and wing domains of SecA"/>
    <property type="match status" value="1"/>
</dbReference>
<dbReference type="SUPFAM" id="SSF52540">
    <property type="entry name" value="P-loop containing nucleoside triphosphate hydrolases"/>
    <property type="match status" value="2"/>
</dbReference>
<dbReference type="SUPFAM" id="SSF81767">
    <property type="entry name" value="Pre-protein crosslinking domain of SecA"/>
    <property type="match status" value="1"/>
</dbReference>
<dbReference type="PROSITE" id="PS01312">
    <property type="entry name" value="SECA"/>
    <property type="match status" value="1"/>
</dbReference>
<dbReference type="PROSITE" id="PS51196">
    <property type="entry name" value="SECA_MOTOR_DEAD"/>
    <property type="match status" value="1"/>
</dbReference>
<sequence length="842" mass="95307">MSNILRKVIENDKGELRKLEKIAKKVESYADYMESLSDKDLQAKTPEFKQRYQNGETLEQLLPEAFAVVREAARRVLGLYPYRVQIMGGIVLHNGDVPEMRTGEGKTLTATMPVYLNALAGKGVHVITVNEYLSTRDATEMGEVYSWLGLSVGINLAAKSPAEKREAYLCDITYSTNSEVGFDYLRDNMVVRQEDMVQRPLNFALVDEVDSVLIDEARTPLIVSGAVSSETNQLYIRADMFVKTLDSVDYIIDVPTKTIGLSDSGIDKAESYFNLSNLYDIENVALTHFVDNALRANYIMLLDIDYVVSEEGEILIVDQFTGRTMEGRRFSDGLHQAIEAKEGVRIQEESKTSASITYQNMFRMYKKLAGMTGTAKTEEEEFREVYNMRIIPIPTNRPIARIDHTDLLYATLNSKFKAVVADVKARYEKGQPVLVGTVAVETSDLISKKLVEAGIPHEVLNAKNHFKEAQIIMNAGQRGAVTIATNMAGRGTDIKLGEGVRELGGLCVIGTERHESRRIDNQLRGRSGRQGDPGESQFYLSLEDELMRRFGTDRIKAFLDRMNHDDEDIVIKSRMLSRQVESAQKRVEGNNYDTRKQVLQYDDVMREQREIIYANRRDVITANRDLGPEIKAMIKRTIDRAVDAHSRTNRKDAIDAIVTFARTSIVPEETIGAKELRGLKDDQIKDKLYQRALEIYDKQLSKLRDQDAILEFQKVLILMIVDNKWTEHIDALDQLRNAVGLRGYAQNNPVVEYQSEGFKMFQDMIGAIEFDVTRTMMKAQIHEQERERATQYATTTAAQNIQSQAIGADFDSSADFSRVERNDACPCHSGKKFKNCHGRKAF</sequence>
<name>SECA_STREM</name>
<keyword id="KW-0067">ATP-binding</keyword>
<keyword id="KW-1003">Cell membrane</keyword>
<keyword id="KW-0963">Cytoplasm</keyword>
<keyword id="KW-0472">Membrane</keyword>
<keyword id="KW-0479">Metal-binding</keyword>
<keyword id="KW-0547">Nucleotide-binding</keyword>
<keyword id="KW-0653">Protein transport</keyword>
<keyword id="KW-1278">Translocase</keyword>
<keyword id="KW-0811">Translocation</keyword>
<keyword id="KW-0813">Transport</keyword>
<keyword id="KW-0862">Zinc</keyword>
<accession>B4U176</accession>
<reference key="1">
    <citation type="journal article" date="2008" name="PLoS ONE">
        <title>Genome sequence of a lancefield group C Streptococcus zooepidemicus strain causing epidemic nephritis: new information about an old disease.</title>
        <authorList>
            <person name="Beres S.B."/>
            <person name="Sesso R."/>
            <person name="Pinto S.W.L."/>
            <person name="Hoe N.P."/>
            <person name="Porcella S.F."/>
            <person name="Deleo F.R."/>
            <person name="Musser J.M."/>
        </authorList>
    </citation>
    <scope>NUCLEOTIDE SEQUENCE [LARGE SCALE GENOMIC DNA]</scope>
    <source>
        <strain>MGCS10565</strain>
    </source>
</reference>
<evidence type="ECO:0000255" key="1">
    <source>
        <dbReference type="HAMAP-Rule" id="MF_01382"/>
    </source>
</evidence>